<dbReference type="EC" id="4.2.1.9" evidence="1"/>
<dbReference type="EMBL" id="CP001600">
    <property type="protein sequence ID" value="ACR67340.1"/>
    <property type="molecule type" value="Genomic_DNA"/>
</dbReference>
<dbReference type="RefSeq" id="WP_015869561.1">
    <property type="nucleotide sequence ID" value="NZ_CP169062.1"/>
</dbReference>
<dbReference type="SMR" id="C5BBA5"/>
<dbReference type="STRING" id="67780.B6E78_11560"/>
<dbReference type="GeneID" id="69537189"/>
<dbReference type="KEGG" id="eic:NT01EI_0080"/>
<dbReference type="PATRIC" id="fig|634503.3.peg.73"/>
<dbReference type="HOGENOM" id="CLU_014271_4_3_6"/>
<dbReference type="OrthoDB" id="9807077at2"/>
<dbReference type="UniPathway" id="UPA00047">
    <property type="reaction ID" value="UER00057"/>
</dbReference>
<dbReference type="UniPathway" id="UPA00049">
    <property type="reaction ID" value="UER00061"/>
</dbReference>
<dbReference type="Proteomes" id="UP000001485">
    <property type="component" value="Chromosome"/>
</dbReference>
<dbReference type="GO" id="GO:0005829">
    <property type="term" value="C:cytosol"/>
    <property type="evidence" value="ECO:0007669"/>
    <property type="project" value="TreeGrafter"/>
</dbReference>
<dbReference type="GO" id="GO:0051537">
    <property type="term" value="F:2 iron, 2 sulfur cluster binding"/>
    <property type="evidence" value="ECO:0007669"/>
    <property type="project" value="UniProtKB-UniRule"/>
</dbReference>
<dbReference type="GO" id="GO:0004160">
    <property type="term" value="F:dihydroxy-acid dehydratase activity"/>
    <property type="evidence" value="ECO:0007669"/>
    <property type="project" value="UniProtKB-UniRule"/>
</dbReference>
<dbReference type="GO" id="GO:0000287">
    <property type="term" value="F:magnesium ion binding"/>
    <property type="evidence" value="ECO:0007669"/>
    <property type="project" value="UniProtKB-UniRule"/>
</dbReference>
<dbReference type="GO" id="GO:0009097">
    <property type="term" value="P:isoleucine biosynthetic process"/>
    <property type="evidence" value="ECO:0007669"/>
    <property type="project" value="UniProtKB-UniRule"/>
</dbReference>
<dbReference type="GO" id="GO:0009099">
    <property type="term" value="P:L-valine biosynthetic process"/>
    <property type="evidence" value="ECO:0007669"/>
    <property type="project" value="UniProtKB-UniRule"/>
</dbReference>
<dbReference type="FunFam" id="3.50.30.80:FF:000001">
    <property type="entry name" value="Dihydroxy-acid dehydratase"/>
    <property type="match status" value="1"/>
</dbReference>
<dbReference type="Gene3D" id="3.50.30.80">
    <property type="entry name" value="IlvD/EDD C-terminal domain-like"/>
    <property type="match status" value="1"/>
</dbReference>
<dbReference type="HAMAP" id="MF_00012">
    <property type="entry name" value="IlvD"/>
    <property type="match status" value="1"/>
</dbReference>
<dbReference type="InterPro" id="IPR042096">
    <property type="entry name" value="Dihydro-acid_dehy_C"/>
</dbReference>
<dbReference type="InterPro" id="IPR004404">
    <property type="entry name" value="DihydroxyA_deHydtase"/>
</dbReference>
<dbReference type="InterPro" id="IPR020558">
    <property type="entry name" value="DiOHA_6PGluconate_deHydtase_CS"/>
</dbReference>
<dbReference type="InterPro" id="IPR056740">
    <property type="entry name" value="ILV_EDD_C"/>
</dbReference>
<dbReference type="InterPro" id="IPR000581">
    <property type="entry name" value="ILV_EDD_N"/>
</dbReference>
<dbReference type="InterPro" id="IPR037237">
    <property type="entry name" value="IlvD/EDD_N"/>
</dbReference>
<dbReference type="NCBIfam" id="TIGR00110">
    <property type="entry name" value="ilvD"/>
    <property type="match status" value="1"/>
</dbReference>
<dbReference type="NCBIfam" id="NF009103">
    <property type="entry name" value="PRK12448.1"/>
    <property type="match status" value="1"/>
</dbReference>
<dbReference type="PANTHER" id="PTHR43661">
    <property type="entry name" value="D-XYLONATE DEHYDRATASE"/>
    <property type="match status" value="1"/>
</dbReference>
<dbReference type="PANTHER" id="PTHR43661:SF3">
    <property type="entry name" value="D-XYLONATE DEHYDRATASE YAGF-RELATED"/>
    <property type="match status" value="1"/>
</dbReference>
<dbReference type="Pfam" id="PF24877">
    <property type="entry name" value="ILV_EDD_C"/>
    <property type="match status" value="1"/>
</dbReference>
<dbReference type="Pfam" id="PF00920">
    <property type="entry name" value="ILVD_EDD_N"/>
    <property type="match status" value="1"/>
</dbReference>
<dbReference type="SUPFAM" id="SSF143975">
    <property type="entry name" value="IlvD/EDD N-terminal domain-like"/>
    <property type="match status" value="1"/>
</dbReference>
<dbReference type="SUPFAM" id="SSF52016">
    <property type="entry name" value="LeuD/IlvD-like"/>
    <property type="match status" value="1"/>
</dbReference>
<dbReference type="PROSITE" id="PS00886">
    <property type="entry name" value="ILVD_EDD_1"/>
    <property type="match status" value="1"/>
</dbReference>
<dbReference type="PROSITE" id="PS00887">
    <property type="entry name" value="ILVD_EDD_2"/>
    <property type="match status" value="1"/>
</dbReference>
<sequence length="616" mass="65804">MPKYRSATTTHGRNMAGARALWRATGMTDADFGKPIIAVVNSFTQFVPGHVHLRDLGRLVAAQIEATGGVAKEFNTIAVDDGIAMGHGGMLYSLPSRELIADSVEYMVNAHCADAMVCISNCDKITPGMMMAALRLNIPVIFVSGGPMEAGKTKLSDRLIKLDLVDAMIQGANPQVSDAQSEQIERAACPTCGSCSGMFTANSMNCLTEALGLALPGNGSLLATHADRRALFEEAGQRIVALTRRYYEQDDVSVLPRSIACKAAFENAMTLDIAMGGSTNTVLHLLAAAQEGEIDFTLADIDRLSRQVPHLCKVAPSTPDYHMEDVHRAGGVMGILGELDRAGLLNRGVANVLGLGLSETLARYDIMRSDDDALQRLYRAGPAGLRTVEPFAQSCRWDALDRDRQQGCIRAREHAYSQDGGLAVLSGNLAQDGCIVKTAGVDPDSLVFRGPARVFESQEEAVEAILGGRIHPGDVLVIRYEGPKGGPGMQEMLYPTAYLKSMGLGKQCALITDGRFSGGTSGLSIGHVSPEAASGGAIALVRDGDPIEIDIPVRHIRLAIAESELALRRQQELARGTQAWTPRDRRRKVSLALRAYASLATSADRGAVRDRAKLGG</sequence>
<gene>
    <name evidence="1" type="primary">ilvD</name>
    <name type="ordered locus">NT01EI_0080</name>
</gene>
<feature type="chain" id="PRO_1000201776" description="Dihydroxy-acid dehydratase">
    <location>
        <begin position="1"/>
        <end position="616"/>
    </location>
</feature>
<feature type="active site" description="Proton acceptor" evidence="1">
    <location>
        <position position="517"/>
    </location>
</feature>
<feature type="binding site" evidence="1">
    <location>
        <position position="81"/>
    </location>
    <ligand>
        <name>Mg(2+)</name>
        <dbReference type="ChEBI" id="CHEBI:18420"/>
    </ligand>
</feature>
<feature type="binding site" evidence="1">
    <location>
        <position position="122"/>
    </location>
    <ligand>
        <name>[2Fe-2S] cluster</name>
        <dbReference type="ChEBI" id="CHEBI:190135"/>
    </ligand>
</feature>
<feature type="binding site" evidence="1">
    <location>
        <position position="123"/>
    </location>
    <ligand>
        <name>Mg(2+)</name>
        <dbReference type="ChEBI" id="CHEBI:18420"/>
    </ligand>
</feature>
<feature type="binding site" description="via carbamate group" evidence="1">
    <location>
        <position position="124"/>
    </location>
    <ligand>
        <name>Mg(2+)</name>
        <dbReference type="ChEBI" id="CHEBI:18420"/>
    </ligand>
</feature>
<feature type="binding site" evidence="1">
    <location>
        <position position="195"/>
    </location>
    <ligand>
        <name>[2Fe-2S] cluster</name>
        <dbReference type="ChEBI" id="CHEBI:190135"/>
    </ligand>
</feature>
<feature type="binding site" evidence="1">
    <location>
        <position position="491"/>
    </location>
    <ligand>
        <name>Mg(2+)</name>
        <dbReference type="ChEBI" id="CHEBI:18420"/>
    </ligand>
</feature>
<feature type="modified residue" description="N6-carboxylysine" evidence="1">
    <location>
        <position position="124"/>
    </location>
</feature>
<evidence type="ECO:0000255" key="1">
    <source>
        <dbReference type="HAMAP-Rule" id="MF_00012"/>
    </source>
</evidence>
<organism>
    <name type="scientific">Edwardsiella ictaluri (strain 93-146)</name>
    <dbReference type="NCBI Taxonomy" id="634503"/>
    <lineage>
        <taxon>Bacteria</taxon>
        <taxon>Pseudomonadati</taxon>
        <taxon>Pseudomonadota</taxon>
        <taxon>Gammaproteobacteria</taxon>
        <taxon>Enterobacterales</taxon>
        <taxon>Hafniaceae</taxon>
        <taxon>Edwardsiella</taxon>
    </lineage>
</organism>
<accession>C5BBA5</accession>
<comment type="function">
    <text evidence="1">Functions in the biosynthesis of branched-chain amino acids. Catalyzes the dehydration of (2R,3R)-2,3-dihydroxy-3-methylpentanoate (2,3-dihydroxy-3-methylvalerate) into 2-oxo-3-methylpentanoate (2-oxo-3-methylvalerate) and of (2R)-2,3-dihydroxy-3-methylbutanoate (2,3-dihydroxyisovalerate) into 2-oxo-3-methylbutanoate (2-oxoisovalerate), the penultimate precursor to L-isoleucine and L-valine, respectively.</text>
</comment>
<comment type="catalytic activity">
    <reaction evidence="1">
        <text>(2R)-2,3-dihydroxy-3-methylbutanoate = 3-methyl-2-oxobutanoate + H2O</text>
        <dbReference type="Rhea" id="RHEA:24809"/>
        <dbReference type="ChEBI" id="CHEBI:11851"/>
        <dbReference type="ChEBI" id="CHEBI:15377"/>
        <dbReference type="ChEBI" id="CHEBI:49072"/>
        <dbReference type="EC" id="4.2.1.9"/>
    </reaction>
    <physiologicalReaction direction="left-to-right" evidence="1">
        <dbReference type="Rhea" id="RHEA:24810"/>
    </physiologicalReaction>
</comment>
<comment type="catalytic activity">
    <reaction evidence="1">
        <text>(2R,3R)-2,3-dihydroxy-3-methylpentanoate = (S)-3-methyl-2-oxopentanoate + H2O</text>
        <dbReference type="Rhea" id="RHEA:27694"/>
        <dbReference type="ChEBI" id="CHEBI:15377"/>
        <dbReference type="ChEBI" id="CHEBI:35146"/>
        <dbReference type="ChEBI" id="CHEBI:49258"/>
        <dbReference type="EC" id="4.2.1.9"/>
    </reaction>
    <physiologicalReaction direction="left-to-right" evidence="1">
        <dbReference type="Rhea" id="RHEA:27695"/>
    </physiologicalReaction>
</comment>
<comment type="cofactor">
    <cofactor evidence="1">
        <name>[2Fe-2S] cluster</name>
        <dbReference type="ChEBI" id="CHEBI:190135"/>
    </cofactor>
    <text evidence="1">Binds 1 [2Fe-2S] cluster per subunit. This cluster acts as a Lewis acid cofactor.</text>
</comment>
<comment type="cofactor">
    <cofactor evidence="1">
        <name>Mg(2+)</name>
        <dbReference type="ChEBI" id="CHEBI:18420"/>
    </cofactor>
</comment>
<comment type="pathway">
    <text evidence="1">Amino-acid biosynthesis; L-isoleucine biosynthesis; L-isoleucine from 2-oxobutanoate: step 3/4.</text>
</comment>
<comment type="pathway">
    <text evidence="1">Amino-acid biosynthesis; L-valine biosynthesis; L-valine from pyruvate: step 3/4.</text>
</comment>
<comment type="subunit">
    <text evidence="1">Homodimer.</text>
</comment>
<comment type="similarity">
    <text evidence="1">Belongs to the IlvD/Edd family.</text>
</comment>
<proteinExistence type="inferred from homology"/>
<protein>
    <recommendedName>
        <fullName evidence="1">Dihydroxy-acid dehydratase</fullName>
        <shortName evidence="1">DAD</shortName>
        <ecNumber evidence="1">4.2.1.9</ecNumber>
    </recommendedName>
</protein>
<name>ILVD_EDWI9</name>
<reference key="1">
    <citation type="submission" date="2009-03" db="EMBL/GenBank/DDBJ databases">
        <title>Complete genome sequence of Edwardsiella ictaluri 93-146.</title>
        <authorList>
            <person name="Williams M.L."/>
            <person name="Gillaspy A.F."/>
            <person name="Dyer D.W."/>
            <person name="Thune R.L."/>
            <person name="Waldbieser G.C."/>
            <person name="Schuster S.C."/>
            <person name="Gipson J."/>
            <person name="Zaitshik J."/>
            <person name="Landry C."/>
            <person name="Lawrence M.L."/>
        </authorList>
    </citation>
    <scope>NUCLEOTIDE SEQUENCE [LARGE SCALE GENOMIC DNA]</scope>
    <source>
        <strain>93-146</strain>
    </source>
</reference>
<keyword id="KW-0001">2Fe-2S</keyword>
<keyword id="KW-0028">Amino-acid biosynthesis</keyword>
<keyword id="KW-0100">Branched-chain amino acid biosynthesis</keyword>
<keyword id="KW-0408">Iron</keyword>
<keyword id="KW-0411">Iron-sulfur</keyword>
<keyword id="KW-0456">Lyase</keyword>
<keyword id="KW-0460">Magnesium</keyword>
<keyword id="KW-0479">Metal-binding</keyword>